<feature type="chain" id="PRO_0000311977" description="G antigen 12B/C/D/E">
    <location>
        <begin position="1"/>
        <end position="117"/>
    </location>
</feature>
<feature type="region of interest" description="Disordered" evidence="1">
    <location>
        <begin position="1"/>
        <end position="117"/>
    </location>
</feature>
<feature type="compositionally biased region" description="Acidic residues" evidence="1">
    <location>
        <begin position="32"/>
        <end position="45"/>
    </location>
</feature>
<feature type="compositionally biased region" description="Acidic residues" evidence="1">
    <location>
        <begin position="87"/>
        <end position="96"/>
    </location>
</feature>
<feature type="compositionally biased region" description="Basic and acidic residues" evidence="1">
    <location>
        <begin position="103"/>
        <end position="117"/>
    </location>
</feature>
<keyword id="KW-1185">Reference proteome</keyword>
<protein>
    <recommendedName>
        <fullName>G antigen 12B/C/D/E</fullName>
        <shortName>GAGE-12B</shortName>
        <shortName>GAGE-12C</shortName>
        <shortName>GAGE-12D</shortName>
        <shortName>GAGE-12E</shortName>
    </recommendedName>
</protein>
<proteinExistence type="evidence at protein level"/>
<accession>A1L429</accession>
<accession>A6NHF1</accession>
<accession>B7ZL74</accession>
<evidence type="ECO:0000256" key="1">
    <source>
        <dbReference type="SAM" id="MobiDB-lite"/>
    </source>
</evidence>
<evidence type="ECO:0000305" key="2"/>
<comment type="interaction">
    <interactant intactId="EBI-10172187">
        <id>A1L429</id>
    </interactant>
    <interactant intactId="EBI-10172181">
        <id>Q53SE7</id>
        <label>FLJ13057</label>
    </interactant>
    <organismsDiffer>false</organismsDiffer>
    <experiments>3</experiments>
</comment>
<comment type="interaction">
    <interactant intactId="EBI-10172187">
        <id>A1L429</id>
    </interactant>
    <interactant intactId="EBI-745707">
        <id>Q8NEA9</id>
        <label>GMCL2</label>
    </interactant>
    <organismsDiffer>false</organismsDiffer>
    <experiments>3</experiments>
</comment>
<comment type="miscellaneous">
    <text>This gene belongs to a multigene family expressed in a large variety of tumors whereas in normal tissues, expression is restricted to germ cells. These genes organized in clustered repeats, have a high degree of predicted sequence identity, but differ by scattered single nucleotide substitution. Their sequences contain either the antigenic peptide YYWPRPRRY or YRPRPRRY which is recognized by cytotoxic T-cells.</text>
</comment>
<comment type="similarity">
    <text evidence="2">Belongs to the GAGE family.</text>
</comment>
<comment type="caution">
    <text evidence="2">The first GAGE nomenclature was based on identified mRNA sequences, but the high identity of the GAGE members made impossible to separate products of paralogous genes from polymorph products. PubMed:18179644 presented a new GAGE gene nomenclature based on the identified genes and their products. GAGE12B is present as fragment in GRCh37 reference genome assembly due to an unsequenced gap between two clusters in the GAGE locus.</text>
</comment>
<organism>
    <name type="scientific">Homo sapiens</name>
    <name type="common">Human</name>
    <dbReference type="NCBI Taxonomy" id="9606"/>
    <lineage>
        <taxon>Eukaryota</taxon>
        <taxon>Metazoa</taxon>
        <taxon>Chordata</taxon>
        <taxon>Craniata</taxon>
        <taxon>Vertebrata</taxon>
        <taxon>Euteleostomi</taxon>
        <taxon>Mammalia</taxon>
        <taxon>Eutheria</taxon>
        <taxon>Euarchontoglires</taxon>
        <taxon>Primates</taxon>
        <taxon>Haplorrhini</taxon>
        <taxon>Catarrhini</taxon>
        <taxon>Hominidae</taxon>
        <taxon>Homo</taxon>
    </lineage>
</organism>
<dbReference type="EMBL" id="AC142497">
    <property type="status" value="NOT_ANNOTATED_CDS"/>
    <property type="molecule type" value="Genomic_DNA"/>
</dbReference>
<dbReference type="EMBL" id="BC130374">
    <property type="protein sequence ID" value="AAI30375.1"/>
    <property type="molecule type" value="mRNA"/>
</dbReference>
<dbReference type="EMBL" id="BC143615">
    <property type="protein sequence ID" value="AAI43616.1"/>
    <property type="molecule type" value="mRNA"/>
</dbReference>
<dbReference type="EMBL" id="BC143619">
    <property type="protein sequence ID" value="AAI43620.1"/>
    <property type="molecule type" value="mRNA"/>
</dbReference>
<dbReference type="CCDS" id="CCDS43943.1"/>
<dbReference type="CCDS" id="CCDS43945.1"/>
<dbReference type="CCDS" id="CCDS48113.1"/>
<dbReference type="RefSeq" id="NP_001091878.1">
    <property type="nucleotide sequence ID" value="NM_001098408.1"/>
</dbReference>
<dbReference type="RefSeq" id="NP_001091888.1">
    <property type="nucleotide sequence ID" value="NM_001098418.1"/>
</dbReference>
<dbReference type="RefSeq" id="NP_001120671.1">
    <property type="nucleotide sequence ID" value="NM_001127199.1"/>
</dbReference>
<dbReference type="RefSeq" id="NP_001120817.1">
    <property type="nucleotide sequence ID" value="NM_001127345.1"/>
</dbReference>
<dbReference type="BioGRID" id="609823">
    <property type="interactions" value="1"/>
</dbReference>
<dbReference type="BioGRID" id="609829">
    <property type="interactions" value="3"/>
</dbReference>
<dbReference type="BioGRID" id="609832">
    <property type="interactions" value="1"/>
</dbReference>
<dbReference type="BioGRID" id="935801">
    <property type="interactions" value="1"/>
</dbReference>
<dbReference type="IntAct" id="A1L429">
    <property type="interactions" value="2"/>
</dbReference>
<dbReference type="STRING" id="9606.ENSP00000371117"/>
<dbReference type="iPTMnet" id="A1L429"/>
<dbReference type="PhosphoSitePlus" id="A1L429"/>
<dbReference type="BioMuta" id="GAGE12B"/>
<dbReference type="jPOST" id="A1L429"/>
<dbReference type="MassIVE" id="A1L429"/>
<dbReference type="PaxDb" id="9606-ENSP00000371117"/>
<dbReference type="PeptideAtlas" id="A1L429"/>
<dbReference type="Pumba" id="A1L429"/>
<dbReference type="Antibodypedia" id="66732">
    <property type="antibodies" value="28 antibodies from 7 providers"/>
</dbReference>
<dbReference type="Antibodypedia" id="75828">
    <property type="antibodies" value="7 antibodies from 4 providers"/>
</dbReference>
<dbReference type="Antibodypedia" id="77265">
    <property type="antibodies" value="3 antibodies from 2 providers"/>
</dbReference>
<dbReference type="DNASU" id="729428"/>
<dbReference type="Ensembl" id="ENST00000381698.5">
    <property type="protein sequence ID" value="ENSP00000371117.3"/>
    <property type="gene ID" value="ENSG00000216649.5"/>
</dbReference>
<dbReference type="Ensembl" id="ENST00000405679.4">
    <property type="protein sequence ID" value="ENSP00000384214.3"/>
    <property type="gene ID" value="ENSG00000227488.3"/>
</dbReference>
<dbReference type="Ensembl" id="ENST00000420398.3">
    <property type="protein sequence ID" value="ENSP00000397103.2"/>
    <property type="gene ID" value="ENSG00000237671.4"/>
</dbReference>
<dbReference type="GeneID" id="100132399"/>
<dbReference type="GeneID" id="729422"/>
<dbReference type="GeneID" id="729428"/>
<dbReference type="GeneID" id="729431"/>
<dbReference type="KEGG" id="hsa:100132399"/>
<dbReference type="KEGG" id="hsa:729422"/>
<dbReference type="KEGG" id="hsa:729428"/>
<dbReference type="KEGG" id="hsa:729431"/>
<dbReference type="MANE-Select" id="ENST00000381698.5">
    <property type="protein sequence ID" value="ENSP00000371117.3"/>
    <property type="RefSeq nucleotide sequence ID" value="NM_001098418.3"/>
    <property type="RefSeq protein sequence ID" value="NP_001091888.1"/>
</dbReference>
<dbReference type="MANE-Select" id="ENST00000405679.4">
    <property type="protein sequence ID" value="ENSP00000384214.3"/>
    <property type="RefSeq nucleotide sequence ID" value="NM_001127199.3"/>
    <property type="RefSeq protein sequence ID" value="NP_001120671.1"/>
</dbReference>
<dbReference type="MANE-Select" id="ENST00000420398.3">
    <property type="protein sequence ID" value="ENSP00000397103.2"/>
    <property type="RefSeq nucleotide sequence ID" value="NM_001098408.3"/>
    <property type="RefSeq protein sequence ID" value="NP_001091878.1"/>
</dbReference>
<dbReference type="UCSC" id="uc004doc.5">
    <property type="organism name" value="human"/>
</dbReference>
<dbReference type="AGR" id="HGNC:26779"/>
<dbReference type="AGR" id="HGNC:28402"/>
<dbReference type="AGR" id="HGNC:31904"/>
<dbReference type="AGR" id="HGNC:31905"/>
<dbReference type="CTD" id="100132399"/>
<dbReference type="CTD" id="729422"/>
<dbReference type="CTD" id="729428"/>
<dbReference type="CTD" id="729431"/>
<dbReference type="DisGeNET" id="729428"/>
<dbReference type="GeneCards" id="GAGE12B"/>
<dbReference type="GeneCards" id="GAGE12C"/>
<dbReference type="GeneCards" id="GAGE12D"/>
<dbReference type="GeneCards" id="GAGE12E"/>
<dbReference type="HGNC" id="HGNC:26779">
    <property type="gene designation" value="GAGE12B"/>
</dbReference>
<dbReference type="HGNC" id="HGNC:28402">
    <property type="gene designation" value="GAGE12C"/>
</dbReference>
<dbReference type="HGNC" id="HGNC:31904">
    <property type="gene designation" value="GAGE12D"/>
</dbReference>
<dbReference type="HGNC" id="HGNC:31905">
    <property type="gene designation" value="GAGE12E"/>
</dbReference>
<dbReference type="HPA" id="ENSG00000216649">
    <property type="expression patterns" value="Tissue enriched (testis)"/>
</dbReference>
<dbReference type="HPA" id="ENSG00000227488">
    <property type="expression patterns" value="Tissue enriched (testis)"/>
</dbReference>
<dbReference type="HPA" id="ENSG00000237671">
    <property type="expression patterns" value="Tissue enriched (testis)"/>
</dbReference>
<dbReference type="MIM" id="300727">
    <property type="type" value="gene"/>
</dbReference>
<dbReference type="MIM" id="300728">
    <property type="type" value="gene"/>
</dbReference>
<dbReference type="MIM" id="300729">
    <property type="type" value="gene"/>
</dbReference>
<dbReference type="neXtProt" id="NX_A1L429"/>
<dbReference type="PharmGKB" id="PA145148775"/>
<dbReference type="VEuPathDB" id="HostDB:ENSG00000216649"/>
<dbReference type="VEuPathDB" id="HostDB:ENSG00000227488"/>
<dbReference type="VEuPathDB" id="HostDB:ENSG00000237671"/>
<dbReference type="eggNOG" id="ENOG502SZ68">
    <property type="taxonomic scope" value="Eukaryota"/>
</dbReference>
<dbReference type="GeneTree" id="ENSGT00940000153097"/>
<dbReference type="HOGENOM" id="CLU_150116_0_0_1"/>
<dbReference type="InParanoid" id="A1L429"/>
<dbReference type="OrthoDB" id="9539459at2759"/>
<dbReference type="PAN-GO" id="A1L429">
    <property type="GO annotations" value="0 GO annotations based on evolutionary models"/>
</dbReference>
<dbReference type="PhylomeDB" id="A1L429"/>
<dbReference type="TreeFam" id="TF340669"/>
<dbReference type="PathwayCommons" id="A1L429"/>
<dbReference type="SignaLink" id="A1L429"/>
<dbReference type="BioGRID-ORCS" id="100132399">
    <property type="hits" value="7 hits in 47 CRISPR screens"/>
</dbReference>
<dbReference type="BioGRID-ORCS" id="729422">
    <property type="hits" value="7 hits in 155 CRISPR screens"/>
</dbReference>
<dbReference type="BioGRID-ORCS" id="729428">
    <property type="hits" value="13 hits in 74 CRISPR screens"/>
</dbReference>
<dbReference type="BioGRID-ORCS" id="729431">
    <property type="hits" value="4 hits in 33 CRISPR screens"/>
</dbReference>
<dbReference type="Pharos" id="A1L429">
    <property type="development level" value="Tdark"/>
</dbReference>
<dbReference type="PRO" id="PR:A1L429"/>
<dbReference type="Proteomes" id="UP000005640">
    <property type="component" value="Chromosome X"/>
</dbReference>
<dbReference type="RNAct" id="A1L429">
    <property type="molecule type" value="protein"/>
</dbReference>
<dbReference type="Bgee" id="ENSG00000216649">
    <property type="expression patterns" value="Expressed in male germ line stem cell (sensu Vertebrata) in testis and 68 other cell types or tissues"/>
</dbReference>
<dbReference type="InterPro" id="IPR031320">
    <property type="entry name" value="GAGE"/>
</dbReference>
<dbReference type="InterPro" id="IPR008625">
    <property type="entry name" value="GAGE_fam"/>
</dbReference>
<dbReference type="PANTHER" id="PTHR14047:SF30">
    <property type="entry name" value="G ANTIGEN 1-RELATED"/>
    <property type="match status" value="1"/>
</dbReference>
<dbReference type="PANTHER" id="PTHR14047">
    <property type="entry name" value="P ANTIGEN FAMILY MEMBER 5-RELATED"/>
    <property type="match status" value="1"/>
</dbReference>
<dbReference type="Pfam" id="PF05831">
    <property type="entry name" value="GAGE"/>
    <property type="match status" value="1"/>
</dbReference>
<dbReference type="SMART" id="SM01379">
    <property type="entry name" value="GAGE"/>
    <property type="match status" value="1"/>
</dbReference>
<sequence>MSWRGRSTYYWPRPRRYVQPPEMIGPMRPEQFSDEVEPATPEEGEPATQCQDPAAAQEGEDEGASAGQGPKPEAHSQEQGHPQTGCECEDGPDGQEMDPPNPEEVKTPEEGEKQSQC</sequence>
<gene>
    <name type="primary">GAGE12B</name>
</gene>
<gene>
    <name type="primary">GAGE12C</name>
</gene>
<gene>
    <name type="primary">GAGE12D</name>
</gene>
<gene>
    <name type="primary">GAGE12E</name>
</gene>
<name>GG12C_HUMAN</name>
<reference key="1">
    <citation type="journal article" date="2005" name="Nature">
        <title>The DNA sequence of the human X chromosome.</title>
        <authorList>
            <person name="Ross M.T."/>
            <person name="Grafham D.V."/>
            <person name="Coffey A.J."/>
            <person name="Scherer S."/>
            <person name="McLay K."/>
            <person name="Muzny D."/>
            <person name="Platzer M."/>
            <person name="Howell G.R."/>
            <person name="Burrows C."/>
            <person name="Bird C.P."/>
            <person name="Frankish A."/>
            <person name="Lovell F.L."/>
            <person name="Howe K.L."/>
            <person name="Ashurst J.L."/>
            <person name="Fulton R.S."/>
            <person name="Sudbrak R."/>
            <person name="Wen G."/>
            <person name="Jones M.C."/>
            <person name="Hurles M.E."/>
            <person name="Andrews T.D."/>
            <person name="Scott C.E."/>
            <person name="Searle S."/>
            <person name="Ramser J."/>
            <person name="Whittaker A."/>
            <person name="Deadman R."/>
            <person name="Carter N.P."/>
            <person name="Hunt S.E."/>
            <person name="Chen R."/>
            <person name="Cree A."/>
            <person name="Gunaratne P."/>
            <person name="Havlak P."/>
            <person name="Hodgson A."/>
            <person name="Metzker M.L."/>
            <person name="Richards S."/>
            <person name="Scott G."/>
            <person name="Steffen D."/>
            <person name="Sodergren E."/>
            <person name="Wheeler D.A."/>
            <person name="Worley K.C."/>
            <person name="Ainscough R."/>
            <person name="Ambrose K.D."/>
            <person name="Ansari-Lari M.A."/>
            <person name="Aradhya S."/>
            <person name="Ashwell R.I."/>
            <person name="Babbage A.K."/>
            <person name="Bagguley C.L."/>
            <person name="Ballabio A."/>
            <person name="Banerjee R."/>
            <person name="Barker G.E."/>
            <person name="Barlow K.F."/>
            <person name="Barrett I.P."/>
            <person name="Bates K.N."/>
            <person name="Beare D.M."/>
            <person name="Beasley H."/>
            <person name="Beasley O."/>
            <person name="Beck A."/>
            <person name="Bethel G."/>
            <person name="Blechschmidt K."/>
            <person name="Brady N."/>
            <person name="Bray-Allen S."/>
            <person name="Bridgeman A.M."/>
            <person name="Brown A.J."/>
            <person name="Brown M.J."/>
            <person name="Bonnin D."/>
            <person name="Bruford E.A."/>
            <person name="Buhay C."/>
            <person name="Burch P."/>
            <person name="Burford D."/>
            <person name="Burgess J."/>
            <person name="Burrill W."/>
            <person name="Burton J."/>
            <person name="Bye J.M."/>
            <person name="Carder C."/>
            <person name="Carrel L."/>
            <person name="Chako J."/>
            <person name="Chapman J.C."/>
            <person name="Chavez D."/>
            <person name="Chen E."/>
            <person name="Chen G."/>
            <person name="Chen Y."/>
            <person name="Chen Z."/>
            <person name="Chinault C."/>
            <person name="Ciccodicola A."/>
            <person name="Clark S.Y."/>
            <person name="Clarke G."/>
            <person name="Clee C.M."/>
            <person name="Clegg S."/>
            <person name="Clerc-Blankenburg K."/>
            <person name="Clifford K."/>
            <person name="Cobley V."/>
            <person name="Cole C.G."/>
            <person name="Conquer J.S."/>
            <person name="Corby N."/>
            <person name="Connor R.E."/>
            <person name="David R."/>
            <person name="Davies J."/>
            <person name="Davis C."/>
            <person name="Davis J."/>
            <person name="Delgado O."/>
            <person name="Deshazo D."/>
            <person name="Dhami P."/>
            <person name="Ding Y."/>
            <person name="Dinh H."/>
            <person name="Dodsworth S."/>
            <person name="Draper H."/>
            <person name="Dugan-Rocha S."/>
            <person name="Dunham A."/>
            <person name="Dunn M."/>
            <person name="Durbin K.J."/>
            <person name="Dutta I."/>
            <person name="Eades T."/>
            <person name="Ellwood M."/>
            <person name="Emery-Cohen A."/>
            <person name="Errington H."/>
            <person name="Evans K.L."/>
            <person name="Faulkner L."/>
            <person name="Francis F."/>
            <person name="Frankland J."/>
            <person name="Fraser A.E."/>
            <person name="Galgoczy P."/>
            <person name="Gilbert J."/>
            <person name="Gill R."/>
            <person name="Gloeckner G."/>
            <person name="Gregory S.G."/>
            <person name="Gribble S."/>
            <person name="Griffiths C."/>
            <person name="Grocock R."/>
            <person name="Gu Y."/>
            <person name="Gwilliam R."/>
            <person name="Hamilton C."/>
            <person name="Hart E.A."/>
            <person name="Hawes A."/>
            <person name="Heath P.D."/>
            <person name="Heitmann K."/>
            <person name="Hennig S."/>
            <person name="Hernandez J."/>
            <person name="Hinzmann B."/>
            <person name="Ho S."/>
            <person name="Hoffs M."/>
            <person name="Howden P.J."/>
            <person name="Huckle E.J."/>
            <person name="Hume J."/>
            <person name="Hunt P.J."/>
            <person name="Hunt A.R."/>
            <person name="Isherwood J."/>
            <person name="Jacob L."/>
            <person name="Johnson D."/>
            <person name="Jones S."/>
            <person name="de Jong P.J."/>
            <person name="Joseph S.S."/>
            <person name="Keenan S."/>
            <person name="Kelly S."/>
            <person name="Kershaw J.K."/>
            <person name="Khan Z."/>
            <person name="Kioschis P."/>
            <person name="Klages S."/>
            <person name="Knights A.J."/>
            <person name="Kosiura A."/>
            <person name="Kovar-Smith C."/>
            <person name="Laird G.K."/>
            <person name="Langford C."/>
            <person name="Lawlor S."/>
            <person name="Leversha M."/>
            <person name="Lewis L."/>
            <person name="Liu W."/>
            <person name="Lloyd C."/>
            <person name="Lloyd D.M."/>
            <person name="Loulseged H."/>
            <person name="Loveland J.E."/>
            <person name="Lovell J.D."/>
            <person name="Lozado R."/>
            <person name="Lu J."/>
            <person name="Lyne R."/>
            <person name="Ma J."/>
            <person name="Maheshwari M."/>
            <person name="Matthews L.H."/>
            <person name="McDowall J."/>
            <person name="McLaren S."/>
            <person name="McMurray A."/>
            <person name="Meidl P."/>
            <person name="Meitinger T."/>
            <person name="Milne S."/>
            <person name="Miner G."/>
            <person name="Mistry S.L."/>
            <person name="Morgan M."/>
            <person name="Morris S."/>
            <person name="Mueller I."/>
            <person name="Mullikin J.C."/>
            <person name="Nguyen N."/>
            <person name="Nordsiek G."/>
            <person name="Nyakatura G."/>
            <person name="O'dell C.N."/>
            <person name="Okwuonu G."/>
            <person name="Palmer S."/>
            <person name="Pandian R."/>
            <person name="Parker D."/>
            <person name="Parrish J."/>
            <person name="Pasternak S."/>
            <person name="Patel D."/>
            <person name="Pearce A.V."/>
            <person name="Pearson D.M."/>
            <person name="Pelan S.E."/>
            <person name="Perez L."/>
            <person name="Porter K.M."/>
            <person name="Ramsey Y."/>
            <person name="Reichwald K."/>
            <person name="Rhodes S."/>
            <person name="Ridler K.A."/>
            <person name="Schlessinger D."/>
            <person name="Schueler M.G."/>
            <person name="Sehra H.K."/>
            <person name="Shaw-Smith C."/>
            <person name="Shen H."/>
            <person name="Sheridan E.M."/>
            <person name="Shownkeen R."/>
            <person name="Skuce C.D."/>
            <person name="Smith M.L."/>
            <person name="Sotheran E.C."/>
            <person name="Steingruber H.E."/>
            <person name="Steward C.A."/>
            <person name="Storey R."/>
            <person name="Swann R.M."/>
            <person name="Swarbreck D."/>
            <person name="Tabor P.E."/>
            <person name="Taudien S."/>
            <person name="Taylor T."/>
            <person name="Teague B."/>
            <person name="Thomas K."/>
            <person name="Thorpe A."/>
            <person name="Timms K."/>
            <person name="Tracey A."/>
            <person name="Trevanion S."/>
            <person name="Tromans A.C."/>
            <person name="d'Urso M."/>
            <person name="Verduzco D."/>
            <person name="Villasana D."/>
            <person name="Waldron L."/>
            <person name="Wall M."/>
            <person name="Wang Q."/>
            <person name="Warren J."/>
            <person name="Warry G.L."/>
            <person name="Wei X."/>
            <person name="West A."/>
            <person name="Whitehead S.L."/>
            <person name="Whiteley M.N."/>
            <person name="Wilkinson J.E."/>
            <person name="Willey D.L."/>
            <person name="Williams G."/>
            <person name="Williams L."/>
            <person name="Williamson A."/>
            <person name="Williamson H."/>
            <person name="Wilming L."/>
            <person name="Woodmansey R.L."/>
            <person name="Wray P.W."/>
            <person name="Yen J."/>
            <person name="Zhang J."/>
            <person name="Zhou J."/>
            <person name="Zoghbi H."/>
            <person name="Zorilla S."/>
            <person name="Buck D."/>
            <person name="Reinhardt R."/>
            <person name="Poustka A."/>
            <person name="Rosenthal A."/>
            <person name="Lehrach H."/>
            <person name="Meindl A."/>
            <person name="Minx P.J."/>
            <person name="Hillier L.W."/>
            <person name="Willard H.F."/>
            <person name="Wilson R.K."/>
            <person name="Waterston R.H."/>
            <person name="Rice C.M."/>
            <person name="Vaudin M."/>
            <person name="Coulson A."/>
            <person name="Nelson D.L."/>
            <person name="Weinstock G."/>
            <person name="Sulston J.E."/>
            <person name="Durbin R.M."/>
            <person name="Hubbard T."/>
            <person name="Gibbs R.A."/>
            <person name="Beck S."/>
            <person name="Rogers J."/>
            <person name="Bentley D.R."/>
        </authorList>
    </citation>
    <scope>NUCLEOTIDE SEQUENCE [LARGE SCALE GENOMIC DNA]</scope>
</reference>
<reference key="2">
    <citation type="journal article" date="2004" name="Genome Res.">
        <title>The status, quality, and expansion of the NIH full-length cDNA project: the Mammalian Gene Collection (MGC).</title>
        <authorList>
            <consortium name="The MGC Project Team"/>
        </authorList>
    </citation>
    <scope>NUCLEOTIDE SEQUENCE [LARGE SCALE MRNA]</scope>
    <source>
        <tissue>Lung</tissue>
        <tissue>Placenta</tissue>
    </source>
</reference>
<reference key="3">
    <citation type="journal article" date="2008" name="Tissue Antigens">
        <title>An overview of the GAGE cancer/testis antigen family with the inclusion of newly identified members.</title>
        <authorList>
            <person name="Gjerstorff M.F."/>
            <person name="Ditzel H.J."/>
        </authorList>
    </citation>
    <scope>GAGE FAMILY</scope>
</reference>